<dbReference type="EMBL" id="AB040468">
    <property type="protein sequence ID" value="BAB12573.1"/>
    <property type="molecule type" value="mRNA"/>
</dbReference>
<dbReference type="RefSeq" id="XP_017444225.1">
    <property type="nucleotide sequence ID" value="XM_017588736.1"/>
</dbReference>
<dbReference type="SMR" id="Q9ESQ7"/>
<dbReference type="FunCoup" id="Q9ESQ7">
    <property type="interactions" value="1418"/>
</dbReference>
<dbReference type="STRING" id="10116.ENSRNOP00000026378"/>
<dbReference type="GlyGen" id="Q9ESQ7">
    <property type="glycosylation" value="1 site"/>
</dbReference>
<dbReference type="iPTMnet" id="Q9ESQ7"/>
<dbReference type="PhosphoSitePlus" id="Q9ESQ7"/>
<dbReference type="PaxDb" id="10116-ENSRNOP00000026378"/>
<dbReference type="UCSC" id="RGD:620297">
    <property type="organism name" value="rat"/>
</dbReference>
<dbReference type="AGR" id="RGD:620297"/>
<dbReference type="RGD" id="620297">
    <property type="gene designation" value="Psd"/>
</dbReference>
<dbReference type="eggNOG" id="KOG0932">
    <property type="taxonomic scope" value="Eukaryota"/>
</dbReference>
<dbReference type="InParanoid" id="Q9ESQ7"/>
<dbReference type="PhylomeDB" id="Q9ESQ7"/>
<dbReference type="PRO" id="PR:Q9ESQ7"/>
<dbReference type="Proteomes" id="UP000002494">
    <property type="component" value="Unplaced"/>
</dbReference>
<dbReference type="GO" id="GO:0032154">
    <property type="term" value="C:cleavage furrow"/>
    <property type="evidence" value="ECO:0000250"/>
    <property type="project" value="UniProtKB"/>
</dbReference>
<dbReference type="GO" id="GO:0043197">
    <property type="term" value="C:dendritic spine"/>
    <property type="evidence" value="ECO:0000266"/>
    <property type="project" value="RGD"/>
</dbReference>
<dbReference type="GO" id="GO:0098978">
    <property type="term" value="C:glutamatergic synapse"/>
    <property type="evidence" value="ECO:0000314"/>
    <property type="project" value="SynGO"/>
</dbReference>
<dbReference type="GO" id="GO:0014069">
    <property type="term" value="C:postsynaptic density"/>
    <property type="evidence" value="ECO:0000266"/>
    <property type="project" value="RGD"/>
</dbReference>
<dbReference type="GO" id="GO:0099092">
    <property type="term" value="C:postsynaptic density, intracellular component"/>
    <property type="evidence" value="ECO:0000266"/>
    <property type="project" value="RGD"/>
</dbReference>
<dbReference type="GO" id="GO:0032587">
    <property type="term" value="C:ruffle membrane"/>
    <property type="evidence" value="ECO:0000250"/>
    <property type="project" value="UniProtKB"/>
</dbReference>
<dbReference type="GO" id="GO:0001409">
    <property type="term" value="F:guanine nucleotide transmembrane transporter activity"/>
    <property type="evidence" value="ECO:0000304"/>
    <property type="project" value="RGD"/>
</dbReference>
<dbReference type="GO" id="GO:0005085">
    <property type="term" value="F:guanyl-nucleotide exchange factor activity"/>
    <property type="evidence" value="ECO:0000250"/>
    <property type="project" value="UniProtKB"/>
</dbReference>
<dbReference type="GO" id="GO:0005543">
    <property type="term" value="F:phospholipid binding"/>
    <property type="evidence" value="ECO:0007669"/>
    <property type="project" value="InterPro"/>
</dbReference>
<dbReference type="GO" id="GO:0015854">
    <property type="term" value="P:guanine transport"/>
    <property type="evidence" value="ECO:0000304"/>
    <property type="project" value="RGD"/>
</dbReference>
<dbReference type="GO" id="GO:0099562">
    <property type="term" value="P:maintenance of postsynaptic density structure"/>
    <property type="evidence" value="ECO:0000314"/>
    <property type="project" value="SynGO"/>
</dbReference>
<dbReference type="GO" id="GO:0030182">
    <property type="term" value="P:neuron differentiation"/>
    <property type="evidence" value="ECO:0000270"/>
    <property type="project" value="RGD"/>
</dbReference>
<dbReference type="GO" id="GO:0031175">
    <property type="term" value="P:neuron projection development"/>
    <property type="evidence" value="ECO:0000266"/>
    <property type="project" value="RGD"/>
</dbReference>
<dbReference type="GO" id="GO:0032012">
    <property type="term" value="P:regulation of ARF protein signal transduction"/>
    <property type="evidence" value="ECO:0007669"/>
    <property type="project" value="InterPro"/>
</dbReference>
<dbReference type="GO" id="GO:0150052">
    <property type="term" value="P:regulation of postsynapse assembly"/>
    <property type="evidence" value="ECO:0000314"/>
    <property type="project" value="SynGO"/>
</dbReference>
<dbReference type="CDD" id="cd13295">
    <property type="entry name" value="PH_EFA6"/>
    <property type="match status" value="1"/>
</dbReference>
<dbReference type="CDD" id="cd00171">
    <property type="entry name" value="Sec7"/>
    <property type="match status" value="1"/>
</dbReference>
<dbReference type="FunFam" id="1.10.1000.11:FF:000004">
    <property type="entry name" value="PH and SEC7 domain-containing protein 2"/>
    <property type="match status" value="1"/>
</dbReference>
<dbReference type="FunFam" id="2.30.29.30:FF:000054">
    <property type="entry name" value="PH and SEC7 domain-containing protein 3"/>
    <property type="match status" value="1"/>
</dbReference>
<dbReference type="Gene3D" id="1.10.1000.11">
    <property type="entry name" value="Arf Nucleotide-binding Site Opener,domain 2"/>
    <property type="match status" value="1"/>
</dbReference>
<dbReference type="Gene3D" id="2.30.29.30">
    <property type="entry name" value="Pleckstrin-homology domain (PH domain)/Phosphotyrosine-binding domain (PTB)"/>
    <property type="match status" value="1"/>
</dbReference>
<dbReference type="InterPro" id="IPR011993">
    <property type="entry name" value="PH-like_dom_sf"/>
</dbReference>
<dbReference type="InterPro" id="IPR041681">
    <property type="entry name" value="PH_9"/>
</dbReference>
<dbReference type="InterPro" id="IPR001605">
    <property type="entry name" value="PH_dom-spectrin-type"/>
</dbReference>
<dbReference type="InterPro" id="IPR001849">
    <property type="entry name" value="PH_domain"/>
</dbReference>
<dbReference type="InterPro" id="IPR023394">
    <property type="entry name" value="Sec7_C_sf"/>
</dbReference>
<dbReference type="InterPro" id="IPR000904">
    <property type="entry name" value="Sec7_dom"/>
</dbReference>
<dbReference type="InterPro" id="IPR035999">
    <property type="entry name" value="Sec7_dom_sf"/>
</dbReference>
<dbReference type="PANTHER" id="PTHR10663">
    <property type="entry name" value="GUANYL-NUCLEOTIDE EXCHANGE FACTOR"/>
    <property type="match status" value="1"/>
</dbReference>
<dbReference type="PANTHER" id="PTHR10663:SF334">
    <property type="entry name" value="PH AND SEC7 DOMAIN-CONTAINING PROTEIN 1"/>
    <property type="match status" value="1"/>
</dbReference>
<dbReference type="Pfam" id="PF15410">
    <property type="entry name" value="PH_9"/>
    <property type="match status" value="1"/>
</dbReference>
<dbReference type="Pfam" id="PF01369">
    <property type="entry name" value="Sec7"/>
    <property type="match status" value="1"/>
</dbReference>
<dbReference type="PRINTS" id="PR00683">
    <property type="entry name" value="SPECTRINPH"/>
</dbReference>
<dbReference type="SMART" id="SM00233">
    <property type="entry name" value="PH"/>
    <property type="match status" value="1"/>
</dbReference>
<dbReference type="SMART" id="SM00222">
    <property type="entry name" value="Sec7"/>
    <property type="match status" value="1"/>
</dbReference>
<dbReference type="SUPFAM" id="SSF50729">
    <property type="entry name" value="PH domain-like"/>
    <property type="match status" value="1"/>
</dbReference>
<dbReference type="SUPFAM" id="SSF48425">
    <property type="entry name" value="Sec7 domain"/>
    <property type="match status" value="1"/>
</dbReference>
<dbReference type="PROSITE" id="PS50003">
    <property type="entry name" value="PH_DOMAIN"/>
    <property type="match status" value="1"/>
</dbReference>
<dbReference type="PROSITE" id="PS50190">
    <property type="entry name" value="SEC7"/>
    <property type="match status" value="1"/>
</dbReference>
<organism>
    <name type="scientific">Rattus norvegicus</name>
    <name type="common">Rat</name>
    <dbReference type="NCBI Taxonomy" id="10116"/>
    <lineage>
        <taxon>Eukaryota</taxon>
        <taxon>Metazoa</taxon>
        <taxon>Chordata</taxon>
        <taxon>Craniata</taxon>
        <taxon>Vertebrata</taxon>
        <taxon>Euteleostomi</taxon>
        <taxon>Mammalia</taxon>
        <taxon>Eutheria</taxon>
        <taxon>Euarchontoglires</taxon>
        <taxon>Glires</taxon>
        <taxon>Rodentia</taxon>
        <taxon>Myomorpha</taxon>
        <taxon>Muroidea</taxon>
        <taxon>Muridae</taxon>
        <taxon>Murinae</taxon>
        <taxon>Rattus</taxon>
    </lineage>
</organism>
<proteinExistence type="evidence at protein level"/>
<sequence length="649" mass="70818">MPHSGLLKSPVPFLPGTSPSADGPDSFSCMFEAIMESHRAKGTSYSSLASLEALASPGPTQSPFFTFEMPPQPPAPRPDPPAPAPLAPLEPDSGTSSVADGPWTQRREVEESDAGATLAPRKELPSPSHSEDSLGLGAAPLGSEPPLSQLVSDSDSELDSTERLALGSTDTLSNGQKADLEAAQRLAKRLYRLDGFRKADVARHLGKNNDFSKLVAGEYLKFFVFTGMTLDQALRVFLKELALMGETQERERVLAHFSQRYFQCNPEALSSEDGAHTLTCALMLLNTDLHGHNIGKRMTCGDFIGNLEGLNDGGDFPRELLKALYSSIKNEKLQWAIDEEELRRSLSELADPNPKVIKRVSGGSGSSSSPFLDLTPEPGAAVYKHGALVRKVHADPDCRKTPRGKRGWKSFHGILKGMILYLQKEEYQPGKALSEAELKNAISIHHALATRASDYSKRPHVFYLRTADWRVFLFQAPSLEQMQSWITRINVVAAMFSAPPFPAAVSSQKKFSRPLLPSAATRLSQEEQVRTHEAKLKAMASELREHRAAHLGKKARGKEAEEQRQKETYLEFEKSRYGTYAALLRVKMKAASEELDAIEAALAQAGSTEEGCPPPHSSPSLQPNPTSQPRAQRPGSEARAGAGSTRPKP</sequence>
<feature type="chain" id="PRO_0000318299" description="PH and SEC7 domain-containing protein 1">
    <location>
        <begin position="1"/>
        <end position="649"/>
    </location>
</feature>
<feature type="domain" description="SEC7" evidence="5">
    <location>
        <begin position="137"/>
        <end position="331"/>
    </location>
</feature>
<feature type="domain" description="PH" evidence="4">
    <location>
        <begin position="381"/>
        <end position="494"/>
    </location>
</feature>
<feature type="region of interest" description="Disordered" evidence="6">
    <location>
        <begin position="1"/>
        <end position="22"/>
    </location>
</feature>
<feature type="region of interest" description="Disordered" evidence="6">
    <location>
        <begin position="57"/>
        <end position="161"/>
    </location>
</feature>
<feature type="region of interest" description="Disordered" evidence="6">
    <location>
        <begin position="601"/>
        <end position="649"/>
    </location>
</feature>
<feature type="coiled-coil region" evidence="3">
    <location>
        <begin position="523"/>
        <end position="549"/>
    </location>
</feature>
<feature type="coiled-coil region" evidence="3">
    <location>
        <begin position="581"/>
        <end position="608"/>
    </location>
</feature>
<feature type="compositionally biased region" description="Pro residues" evidence="6">
    <location>
        <begin position="70"/>
        <end position="88"/>
    </location>
</feature>
<feature type="compositionally biased region" description="Basic and acidic residues" evidence="6">
    <location>
        <begin position="120"/>
        <end position="132"/>
    </location>
</feature>
<feature type="compositionally biased region" description="Polar residues" evidence="6">
    <location>
        <begin position="618"/>
        <end position="630"/>
    </location>
</feature>
<feature type="modified residue" description="Phosphoserine" evidence="9">
    <location>
        <position position="345"/>
    </location>
</feature>
<name>PSD1_RAT</name>
<reference key="1">
    <citation type="journal article" date="2002" name="Brain Res. Mol. Brain Res.">
        <title>Localization of mRNAs for subfamily of guanine nucleotide-exchange proteins (GEP) for ARFs (ADP-ribosylation factors) in the brain of developing and mature rats under normal and postaxotomy conditions.</title>
        <authorList>
            <person name="Suzuki I."/>
            <person name="Owada Y."/>
            <person name="Suzuki R."/>
            <person name="Yoshimoto T."/>
            <person name="Kondo H."/>
        </authorList>
    </citation>
    <scope>NUCLEOTIDE SEQUENCE [MRNA]</scope>
    <scope>TISSUE SPECIFICITY</scope>
    <scope>DEVELOPMENTAL STAGE</scope>
    <source>
        <strain>Wistar</strain>
        <tissue>Brain</tissue>
    </source>
</reference>
<reference key="2">
    <citation type="journal article" date="2012" name="Nat. Commun.">
        <title>Quantitative maps of protein phosphorylation sites across 14 different rat organs and tissues.</title>
        <authorList>
            <person name="Lundby A."/>
            <person name="Secher A."/>
            <person name="Lage K."/>
            <person name="Nordsborg N.B."/>
            <person name="Dmytriyev A."/>
            <person name="Lundby C."/>
            <person name="Olsen J.V."/>
        </authorList>
    </citation>
    <scope>PHOSPHORYLATION [LARGE SCALE ANALYSIS] AT SER-345</scope>
    <scope>IDENTIFICATION BY MASS SPECTROMETRY [LARGE SCALE ANALYSIS]</scope>
</reference>
<keyword id="KW-1003">Cell membrane</keyword>
<keyword id="KW-0966">Cell projection</keyword>
<keyword id="KW-0175">Coiled coil</keyword>
<keyword id="KW-0344">Guanine-nucleotide releasing factor</keyword>
<keyword id="KW-0472">Membrane</keyword>
<keyword id="KW-0597">Phosphoprotein</keyword>
<keyword id="KW-1185">Reference proteome</keyword>
<protein>
    <recommendedName>
        <fullName>PH and SEC7 domain-containing protein 1</fullName>
    </recommendedName>
    <alternativeName>
        <fullName>Exchange factor for ADP-ribosylation factor guanine nucleotide factor 6</fullName>
        <shortName>Exchange factor for ARF6</shortName>
    </alternativeName>
    <alternativeName>
        <fullName>Exchange factor for ARF6 A</fullName>
    </alternativeName>
    <alternativeName>
        <fullName>Pleckstrin homology and SEC7 domain-containing protein 1</fullName>
    </alternativeName>
</protein>
<accession>Q9ESQ7</accession>
<gene>
    <name type="primary">Psd</name>
    <name type="synonym">Efa6</name>
    <name type="synonym">Psd1</name>
</gene>
<evidence type="ECO:0000250" key="1">
    <source>
        <dbReference type="UniProtKB" id="A5PKW4"/>
    </source>
</evidence>
<evidence type="ECO:0000250" key="2">
    <source>
        <dbReference type="UniProtKB" id="Q5DTT2"/>
    </source>
</evidence>
<evidence type="ECO:0000255" key="3"/>
<evidence type="ECO:0000255" key="4">
    <source>
        <dbReference type="PROSITE-ProRule" id="PRU00145"/>
    </source>
</evidence>
<evidence type="ECO:0000255" key="5">
    <source>
        <dbReference type="PROSITE-ProRule" id="PRU00189"/>
    </source>
</evidence>
<evidence type="ECO:0000256" key="6">
    <source>
        <dbReference type="SAM" id="MobiDB-lite"/>
    </source>
</evidence>
<evidence type="ECO:0000269" key="7">
    <source>
    </source>
</evidence>
<evidence type="ECO:0000305" key="8"/>
<evidence type="ECO:0007744" key="9">
    <source>
    </source>
</evidence>
<comment type="function">
    <text evidence="1 2">Guanine nucleotide exchange factor for ARF6 (By similarity). Induces cytoskeletal remodeling (By similarity).</text>
</comment>
<comment type="subunit">
    <text evidence="2">Interacts with ACTN1. Interacts (ARF6-bound form) with KCNK1; does not interact with KCNK1 in the absence of ARF6 (By similarity).</text>
</comment>
<comment type="subcellular location">
    <subcellularLocation>
        <location evidence="1">Cell membrane</location>
    </subcellularLocation>
    <subcellularLocation>
        <location evidence="1">Cell projection</location>
        <location evidence="1">Ruffle membrane</location>
    </subcellularLocation>
    <subcellularLocation>
        <location evidence="1">Cleavage furrow</location>
    </subcellularLocation>
    <text evidence="1">Distributed uniformly on the plasma membrane, as well as throughout the cytoplasm during metaphase. Subsequently concentrated at patches in the equatorial region at the onset of cytokinesis, and becomes distributed in the equatorial region concurrent with cleavage furrow ingression. In later cytokinesis phases, fades away from the cleavage furrow and becomes uniformly distributed throughout the plasma membrane.</text>
</comment>
<comment type="tissue specificity">
    <text evidence="7">Brain. Expressed in the hippocampal and dentate neuronal layers, cerebellar cortex, molecular layer of the hippocampus and dentate gyrus.</text>
</comment>
<comment type="developmental stage">
    <text evidence="7">On embryonic day 15 (15 dpc) and 18 dpc, weakly expressed in the mantle zone throughout the neuraxis. On postnatal days 0 (P0) and P7, expression is evident in the cerebral neocortex, hippocampal pyramidal and dentate granule cell layers, olfactory granule, mitral cell layers and the striatum. A weak expression is seen in the gray matter of di-, mes- and met-encephalon and in the cerebellar Purkinje cells. On P14, expressed in the gray matter of the telencephalon such as the cerebral neocortex, olfactory bulb, hippocampus, dentate gyrus and striatum. On P21 and thereafter detected in the cerebellar granule cells.</text>
</comment>
<comment type="similarity">
    <text evidence="8">Belongs to the PSD family.</text>
</comment>